<dbReference type="EC" id="3.5.4.40"/>
<dbReference type="EMBL" id="CP000481">
    <property type="protein sequence ID" value="ABK52038.1"/>
    <property type="molecule type" value="Genomic_DNA"/>
</dbReference>
<dbReference type="SMR" id="A0LRH8"/>
<dbReference type="FunCoup" id="A0LRH8">
    <property type="interactions" value="229"/>
</dbReference>
<dbReference type="STRING" id="351607.Acel_0264"/>
<dbReference type="KEGG" id="ace:Acel_0264"/>
<dbReference type="eggNOG" id="COG1816">
    <property type="taxonomic scope" value="Bacteria"/>
</dbReference>
<dbReference type="HOGENOM" id="CLU_039228_7_0_11"/>
<dbReference type="InParanoid" id="A0LRH8"/>
<dbReference type="OrthoDB" id="9779574at2"/>
<dbReference type="BRENDA" id="3.5.4.40">
    <property type="organism ID" value="9545"/>
</dbReference>
<dbReference type="UniPathway" id="UPA00079"/>
<dbReference type="Proteomes" id="UP000008221">
    <property type="component" value="Chromosome"/>
</dbReference>
<dbReference type="GO" id="GO:0019239">
    <property type="term" value="F:deaminase activity"/>
    <property type="evidence" value="ECO:0007669"/>
    <property type="project" value="InterPro"/>
</dbReference>
<dbReference type="GO" id="GO:0016814">
    <property type="term" value="F:hydrolase activity, acting on carbon-nitrogen (but not peptide) bonds, in cyclic amidines"/>
    <property type="evidence" value="ECO:0007669"/>
    <property type="project" value="UniProtKB-ARBA"/>
</dbReference>
<dbReference type="GO" id="GO:0046872">
    <property type="term" value="F:metal ion binding"/>
    <property type="evidence" value="ECO:0007669"/>
    <property type="project" value="UniProtKB-KW"/>
</dbReference>
<dbReference type="GO" id="GO:0009234">
    <property type="term" value="P:menaquinone biosynthetic process"/>
    <property type="evidence" value="ECO:0007669"/>
    <property type="project" value="UniProtKB-UniPathway"/>
</dbReference>
<dbReference type="Gene3D" id="3.20.20.140">
    <property type="entry name" value="Metal-dependent hydrolases"/>
    <property type="match status" value="1"/>
</dbReference>
<dbReference type="InterPro" id="IPR001365">
    <property type="entry name" value="A_deaminase_dom"/>
</dbReference>
<dbReference type="InterPro" id="IPR006330">
    <property type="entry name" value="Ado/ade_deaminase"/>
</dbReference>
<dbReference type="InterPro" id="IPR032466">
    <property type="entry name" value="Metal_Hydrolase"/>
</dbReference>
<dbReference type="NCBIfam" id="TIGR01430">
    <property type="entry name" value="aden_deam"/>
    <property type="match status" value="1"/>
</dbReference>
<dbReference type="PANTHER" id="PTHR43114">
    <property type="entry name" value="ADENINE DEAMINASE"/>
    <property type="match status" value="1"/>
</dbReference>
<dbReference type="PANTHER" id="PTHR43114:SF6">
    <property type="entry name" value="ADENINE DEAMINASE"/>
    <property type="match status" value="1"/>
</dbReference>
<dbReference type="Pfam" id="PF00962">
    <property type="entry name" value="A_deaminase"/>
    <property type="match status" value="1"/>
</dbReference>
<dbReference type="SUPFAM" id="SSF51556">
    <property type="entry name" value="Metallo-dependent hydrolases"/>
    <property type="match status" value="1"/>
</dbReference>
<keyword id="KW-0378">Hydrolase</keyword>
<keyword id="KW-0474">Menaquinone biosynthesis</keyword>
<keyword id="KW-0479">Metal-binding</keyword>
<keyword id="KW-1185">Reference proteome</keyword>
<keyword id="KW-0862">Zinc</keyword>
<evidence type="ECO:0000250" key="1"/>
<evidence type="ECO:0000255" key="2"/>
<evidence type="ECO:0000269" key="3">
    <source>
    </source>
</evidence>
<evidence type="ECO:0000269" key="4">
    <source>
    </source>
</evidence>
<evidence type="ECO:0000305" key="5"/>
<name>MQNX_ACIC1</name>
<proteinExistence type="evidence at protein level"/>
<feature type="chain" id="PRO_0000425134" description="Aminodeoxyfutalosine deaminase">
    <location>
        <begin position="1"/>
        <end position="356"/>
    </location>
</feature>
<feature type="active site" description="Proton donor" evidence="1">
    <location>
        <position position="202"/>
    </location>
</feature>
<feature type="binding site" evidence="1">
    <location>
        <position position="18"/>
    </location>
    <ligand>
        <name>Zn(2+)</name>
        <dbReference type="ChEBI" id="CHEBI:29105"/>
        <note>catalytic</note>
    </ligand>
</feature>
<feature type="binding site" evidence="1">
    <location>
        <position position="20"/>
    </location>
    <ligand>
        <name>Zn(2+)</name>
        <dbReference type="ChEBI" id="CHEBI:29105"/>
        <note>catalytic</note>
    </ligand>
</feature>
<feature type="binding site" evidence="1">
    <location>
        <position position="73"/>
    </location>
    <ligand>
        <name>substrate</name>
    </ligand>
</feature>
<feature type="binding site" evidence="2">
    <location>
        <position position="140"/>
    </location>
    <ligand>
        <name>substrate</name>
    </ligand>
</feature>
<feature type="binding site" evidence="1">
    <location>
        <position position="172"/>
    </location>
    <ligand>
        <name>substrate</name>
    </ligand>
</feature>
<feature type="binding site" evidence="1">
    <location>
        <position position="199"/>
    </location>
    <ligand>
        <name>Zn(2+)</name>
        <dbReference type="ChEBI" id="CHEBI:29105"/>
        <note>catalytic</note>
    </ligand>
</feature>
<feature type="binding site" evidence="1">
    <location>
        <position position="287"/>
    </location>
    <ligand>
        <name>Zn(2+)</name>
        <dbReference type="ChEBI" id="CHEBI:29105"/>
        <note>catalytic</note>
    </ligand>
</feature>
<sequence>MTPHDPVSVEAVPKIELHVHLEGTVEPATVLDIAARNGLALPVSTVDELSALYRVTTFSDFLRLWILTTNVLRKAEDFSQVVVDYARRAKRHGAVYIEGIFSPVERVMRGVGWAEIFDGYCEGAERAYAEHGVVVRLTPEAYRGADPELVAEMVRYAGRYRDRGVVGVGIGGDERARPTRHYAAAFAPAVDLGLGVVPHAGEFPLFPDGASGAATLRETIEALNPVRIRHGIAAAADPALVAVIRERGIVLDVCPTSNLRTGAIRDLADHPLPRLAAAGIPCTVGTDDPAVFDTDLSREFTIAARLGVEPRLLYDAGITGALCDDDVKSHLRQIGAATTWPTTTATWSTTAAGESL</sequence>
<gene>
    <name type="ordered locus">Acel_0264</name>
</gene>
<organism>
    <name type="scientific">Acidothermus cellulolyticus (strain ATCC 43068 / DSM 8971 / 11B)</name>
    <dbReference type="NCBI Taxonomy" id="351607"/>
    <lineage>
        <taxon>Bacteria</taxon>
        <taxon>Bacillati</taxon>
        <taxon>Actinomycetota</taxon>
        <taxon>Actinomycetes</taxon>
        <taxon>Acidothermales</taxon>
        <taxon>Acidothermaceae</taxon>
        <taxon>Acidothermus</taxon>
    </lineage>
</organism>
<reference key="1">
    <citation type="journal article" date="2009" name="Genome Res.">
        <title>Complete genome of the cellulolytic thermophile Acidothermus cellulolyticus 11B provides insights into its ecophysiological and evolutionary adaptations.</title>
        <authorList>
            <person name="Barabote R.D."/>
            <person name="Xie G."/>
            <person name="Leu D.H."/>
            <person name="Normand P."/>
            <person name="Necsulea A."/>
            <person name="Daubin V."/>
            <person name="Medigue C."/>
            <person name="Adney W.S."/>
            <person name="Xu X.C."/>
            <person name="Lapidus A."/>
            <person name="Parales R.E."/>
            <person name="Detter C."/>
            <person name="Pujic P."/>
            <person name="Bruce D."/>
            <person name="Lavire C."/>
            <person name="Challacombe J.F."/>
            <person name="Brettin T.S."/>
            <person name="Berry A.M."/>
        </authorList>
    </citation>
    <scope>NUCLEOTIDE SEQUENCE [LARGE SCALE GENOMIC DNA]</scope>
    <source>
        <strain>ATCC 43068 / DSM 8971 / 11B</strain>
    </source>
</reference>
<reference key="2">
    <citation type="journal article" date="2011" name="Antimicrob. Agents Chemother.">
        <title>Diversity of the early step of the futalosine pathway.</title>
        <authorList>
            <person name="Arakawa C."/>
            <person name="Kuratsu M."/>
            <person name="Furihata K."/>
            <person name="Hiratsuka T."/>
            <person name="Itoh N."/>
            <person name="Seto H."/>
            <person name="Dairi T."/>
        </authorList>
    </citation>
    <scope>FUNCTION</scope>
    <scope>CATALYTIC ACTIVITY</scope>
    <scope>PATHWAY</scope>
</reference>
<reference key="3">
    <citation type="journal article" date="2013" name="Biochemistry">
        <title>Deamination of 6-aminodeoxyfutalosine in menaquinone biosynthesis by distantly related enzymes.</title>
        <authorList>
            <person name="Goble A.M."/>
            <person name="Toro R."/>
            <person name="Li X."/>
            <person name="Ornelas A."/>
            <person name="Fan H."/>
            <person name="Eswaramoorthy S."/>
            <person name="Patskovsky Y."/>
            <person name="Hillerich B."/>
            <person name="Seidel R."/>
            <person name="Sali A."/>
            <person name="Shoichet B.K."/>
            <person name="Almo S.C."/>
            <person name="Swaminathan S."/>
            <person name="Tanner M.E."/>
            <person name="Raushel F.M."/>
        </authorList>
    </citation>
    <scope>FUNCTION</scope>
    <scope>CATALYTIC ACTIVITY</scope>
    <scope>SUBSTRATE SPECIFICITY</scope>
    <scope>KINETIC PARAMETERS</scope>
    <scope>PATHWAY</scope>
    <source>
        <strain>ATCC 43068 / DSM 8971 / 11B</strain>
    </source>
</reference>
<comment type="function">
    <text evidence="3 4">Catalyzes the deamination of aminodeoxyfutalosine (AFL) into futalosine (FL), a step in the biosynthesis of menaquinone (MK, vitamin K2). Is very poorly efficient on 1-(6-amino-9H-purin-9-yl)-1-deoxy-N-ethyl-beta-D-ribofuranuronamide (NECA), adenosine, 5'-methylthioadenosine, 5'-deoxyadenosine, 2'-deoxyadenosine, and AMP as substrate.</text>
</comment>
<comment type="catalytic activity">
    <reaction evidence="3 4">
        <text>6-amino-6-deoxyfutalosine + H2O + H(+) = futalosine + NH4(+)</text>
        <dbReference type="Rhea" id="RHEA:40075"/>
        <dbReference type="ChEBI" id="CHEBI:15377"/>
        <dbReference type="ChEBI" id="CHEBI:15378"/>
        <dbReference type="ChEBI" id="CHEBI:28938"/>
        <dbReference type="ChEBI" id="CHEBI:58863"/>
        <dbReference type="ChEBI" id="CHEBI:64286"/>
        <dbReference type="EC" id="3.5.4.40"/>
    </reaction>
</comment>
<comment type="cofactor">
    <cofactor evidence="1">
        <name>Zn(2+)</name>
        <dbReference type="ChEBI" id="CHEBI:29105"/>
    </cofactor>
    <text evidence="1">Binds 1 zinc ion per subunit.</text>
</comment>
<comment type="biophysicochemical properties">
    <kinetics>
        <KM evidence="4">6 uM for aminodeoxyfutalosine</KM>
        <KM evidence="4">61 uM for 1-(6-amino-9H-purin-9-yl)-1-deoxy-N-ethyl-beta-D-ribofuranuronamide</KM>
        <text>kcat is 6.8 sec(-1) with aminodeoxyfutalosine as substrate. kcat is 0.007 sec(-1) with 1-(6-amino-9H-purin-9-yl)-1-deoxy-N-ethyl-beta-D-ribofuranuronamide as substrate.</text>
    </kinetics>
</comment>
<comment type="pathway">
    <text evidence="3 4">Quinol/quinone metabolism; menaquinone biosynthesis.</text>
</comment>
<comment type="similarity">
    <text evidence="5">Belongs to the metallo-dependent hydrolases superfamily. Adenosine and AMP deaminases family.</text>
</comment>
<protein>
    <recommendedName>
        <fullName>Aminodeoxyfutalosine deaminase</fullName>
        <shortName>AFL deaminase</shortName>
        <shortName>Aminofutalosine deaminase</shortName>
        <ecNumber>3.5.4.40</ecNumber>
    </recommendedName>
</protein>
<accession>A0LRH8</accession>